<feature type="chain" id="PRO_0000183873" description="Cytochrome c oxidase subunit 3">
    <location>
        <begin position="1"/>
        <end position="268"/>
    </location>
</feature>
<feature type="transmembrane region" description="Helical" evidence="2">
    <location>
        <begin position="23"/>
        <end position="43"/>
    </location>
</feature>
<feature type="transmembrane region" description="Helical" evidence="2">
    <location>
        <begin position="49"/>
        <end position="69"/>
    </location>
</feature>
<feature type="transmembrane region" description="Helical" evidence="2">
    <location>
        <begin position="88"/>
        <end position="108"/>
    </location>
</feature>
<feature type="transmembrane region" description="Helical" evidence="2">
    <location>
        <begin position="141"/>
        <end position="161"/>
    </location>
</feature>
<feature type="transmembrane region" description="Helical" evidence="2">
    <location>
        <begin position="166"/>
        <end position="186"/>
    </location>
</feature>
<feature type="transmembrane region" description="Helical" evidence="2">
    <location>
        <begin position="203"/>
        <end position="223"/>
    </location>
</feature>
<feature type="transmembrane region" description="Helical" evidence="2">
    <location>
        <begin position="246"/>
        <end position="266"/>
    </location>
</feature>
<evidence type="ECO:0000250" key="1">
    <source>
        <dbReference type="UniProtKB" id="P00420"/>
    </source>
</evidence>
<evidence type="ECO:0000255" key="2"/>
<evidence type="ECO:0000305" key="3"/>
<comment type="function">
    <text evidence="1">Component of the cytochrome c oxidase, the last enzyme in the mitochondrial electron transport chain which drives oxidative phosphorylation. The respiratory chain contains 3 multisubunit complexes succinate dehydrogenase (complex II, CII), ubiquinol-cytochrome c oxidoreductase (cytochrome b-c1 complex, complex III, CIII) and cytochrome c oxidase (complex IV, CIV), that cooperate to transfer electrons derived from NADH and succinate to molecular oxygen, creating an electrochemical gradient over the inner membrane that drives transmembrane transport and the ATP synthase. Cytochrome c oxidase is the component of the respiratory chain that catalyzes the reduction of oxygen to water. Electrons originating from reduced cytochrome c in the intermembrane space (IMS) are transferred via the dinuclear copper A center (CU(A)) of subunit 2 and heme A of subunit 1 to the active site in subunit 1, a binuclear center (BNC) formed by heme A3 and copper B (CU(B)). The BNC reduces molecular oxygen to 2 water molecules using 4 electrons from cytochrome c in the IMS and 4 protons from the mitochondrial matrix.</text>
</comment>
<comment type="catalytic activity">
    <reaction evidence="1">
        <text>4 Fe(II)-[cytochrome c] + O2 + 8 H(+)(in) = 4 Fe(III)-[cytochrome c] + 2 H2O + 4 H(+)(out)</text>
        <dbReference type="Rhea" id="RHEA:11436"/>
        <dbReference type="Rhea" id="RHEA-COMP:10350"/>
        <dbReference type="Rhea" id="RHEA-COMP:14399"/>
        <dbReference type="ChEBI" id="CHEBI:15377"/>
        <dbReference type="ChEBI" id="CHEBI:15378"/>
        <dbReference type="ChEBI" id="CHEBI:15379"/>
        <dbReference type="ChEBI" id="CHEBI:29033"/>
        <dbReference type="ChEBI" id="CHEBI:29034"/>
        <dbReference type="EC" id="7.1.1.9"/>
    </reaction>
    <physiologicalReaction direction="left-to-right" evidence="1">
        <dbReference type="Rhea" id="RHEA:11437"/>
    </physiologicalReaction>
</comment>
<comment type="subunit">
    <text evidence="1">Component of the cytochrome c oxidase (complex IV, CIV), a multisubunit enzyme composed of a catalytic core of 3 subunits and several supernumerary subunits. The complex exists as a monomer or a dimer and forms supercomplexes (SCs) in the inner mitochondrial membrane with ubiquinol-cytochrome c oxidoreductase (cytochrome b-c1 complex, complex III, CIII).</text>
</comment>
<comment type="subcellular location">
    <subcellularLocation>
        <location evidence="1">Mitochondrion inner membrane</location>
        <topology evidence="1">Multi-pass membrane protein</topology>
    </subcellularLocation>
</comment>
<comment type="similarity">
    <text evidence="3">Belongs to the cytochrome c oxidase subunit 3 family.</text>
</comment>
<keyword id="KW-0472">Membrane</keyword>
<keyword id="KW-0496">Mitochondrion</keyword>
<keyword id="KW-0999">Mitochondrion inner membrane</keyword>
<keyword id="KW-1185">Reference proteome</keyword>
<keyword id="KW-1278">Translocase</keyword>
<keyword id="KW-0812">Transmembrane</keyword>
<keyword id="KW-1133">Transmembrane helix</keyword>
<dbReference type="EC" id="7.1.1.9"/>
<dbReference type="EMBL" id="AJ307410">
    <property type="protein sequence ID" value="CAC28101.2"/>
    <property type="molecule type" value="Genomic_DNA"/>
</dbReference>
<dbReference type="PIR" id="S51505">
    <property type="entry name" value="S51505"/>
</dbReference>
<dbReference type="RefSeq" id="NP_075434.2">
    <property type="nucleotide sequence ID" value="NC_002659.1"/>
</dbReference>
<dbReference type="SMR" id="Q9B6D8"/>
<dbReference type="FunCoup" id="Q9B6D8">
    <property type="interactions" value="241"/>
</dbReference>
<dbReference type="STRING" id="284591.Q9B6D8"/>
<dbReference type="GeneID" id="802599"/>
<dbReference type="KEGG" id="yli:802599"/>
<dbReference type="InParanoid" id="Q9B6D8"/>
<dbReference type="Proteomes" id="UP000001300">
    <property type="component" value="Mitochondrion"/>
</dbReference>
<dbReference type="GO" id="GO:0005743">
    <property type="term" value="C:mitochondrial inner membrane"/>
    <property type="evidence" value="ECO:0007669"/>
    <property type="project" value="UniProtKB-SubCell"/>
</dbReference>
<dbReference type="GO" id="GO:0005739">
    <property type="term" value="C:mitochondrion"/>
    <property type="evidence" value="ECO:0000318"/>
    <property type="project" value="GO_Central"/>
</dbReference>
<dbReference type="GO" id="GO:0004129">
    <property type="term" value="F:cytochrome-c oxidase activity"/>
    <property type="evidence" value="ECO:0007669"/>
    <property type="project" value="UniProtKB-EC"/>
</dbReference>
<dbReference type="GO" id="GO:0006123">
    <property type="term" value="P:mitochondrial electron transport, cytochrome c to oxygen"/>
    <property type="evidence" value="ECO:0000318"/>
    <property type="project" value="GO_Central"/>
</dbReference>
<dbReference type="CDD" id="cd01665">
    <property type="entry name" value="Cyt_c_Oxidase_III"/>
    <property type="match status" value="1"/>
</dbReference>
<dbReference type="FunFam" id="1.10.287.70:FF:000082">
    <property type="entry name" value="Cytochrome c oxidase subunit 3"/>
    <property type="match status" value="1"/>
</dbReference>
<dbReference type="FunFam" id="1.20.120.80:FF:000002">
    <property type="entry name" value="Cytochrome c oxidase subunit 3"/>
    <property type="match status" value="1"/>
</dbReference>
<dbReference type="Gene3D" id="1.10.287.70">
    <property type="match status" value="1"/>
</dbReference>
<dbReference type="Gene3D" id="1.20.120.80">
    <property type="entry name" value="Cytochrome c oxidase, subunit III, four-helix bundle"/>
    <property type="match status" value="1"/>
</dbReference>
<dbReference type="InterPro" id="IPR024791">
    <property type="entry name" value="Cyt_c/ubiquinol_Oxase_su3"/>
</dbReference>
<dbReference type="InterPro" id="IPR033945">
    <property type="entry name" value="Cyt_c_oxase_su3_dom"/>
</dbReference>
<dbReference type="InterPro" id="IPR000298">
    <property type="entry name" value="Cyt_c_oxidase-like_su3"/>
</dbReference>
<dbReference type="InterPro" id="IPR035973">
    <property type="entry name" value="Cyt_c_oxidase_su3-like_sf"/>
</dbReference>
<dbReference type="InterPro" id="IPR013833">
    <property type="entry name" value="Cyt_c_oxidase_su3_a-hlx"/>
</dbReference>
<dbReference type="PANTHER" id="PTHR11403:SF7">
    <property type="entry name" value="CYTOCHROME C OXIDASE SUBUNIT 3"/>
    <property type="match status" value="1"/>
</dbReference>
<dbReference type="PANTHER" id="PTHR11403">
    <property type="entry name" value="CYTOCHROME C OXIDASE SUBUNIT III"/>
    <property type="match status" value="1"/>
</dbReference>
<dbReference type="Pfam" id="PF00510">
    <property type="entry name" value="COX3"/>
    <property type="match status" value="1"/>
</dbReference>
<dbReference type="SUPFAM" id="SSF81452">
    <property type="entry name" value="Cytochrome c oxidase subunit III-like"/>
    <property type="match status" value="1"/>
</dbReference>
<dbReference type="PROSITE" id="PS50253">
    <property type="entry name" value="COX3"/>
    <property type="match status" value="1"/>
</dbReference>
<accession>Q9B6D8</accession>
<sequence>MNLTLKKFQVHPFHLVAPSPWPILVSFSVMSIMLTLVFNMHGFMHNNYWVVFSAIVAIMTMALWFRDIISEATYLGDHTLAVRKGLNIGFILFVVSELFFFIAIFWAFFHSAMAPTIELGGVWPPVGIEAIGPSELPLLNTILLLCSGATLTWSHHALLGGNRFNTLLGLILTIALAVTFMICQYMEYSNAPFTISDGIFGSVFYFGTGFHGLHIIIGIIMLGVSLWRIYTYQLTNNHHVGYETSILYYHFVDVVWLFLYIVFYWWGT</sequence>
<protein>
    <recommendedName>
        <fullName>Cytochrome c oxidase subunit 3</fullName>
        <ecNumber>7.1.1.9</ecNumber>
    </recommendedName>
    <alternativeName>
        <fullName>Cytochrome c oxidase polypeptide III</fullName>
    </alternativeName>
</protein>
<organism>
    <name type="scientific">Yarrowia lipolytica (strain CLIB 122 / E 150)</name>
    <name type="common">Yeast</name>
    <name type="synonym">Candida lipolytica</name>
    <dbReference type="NCBI Taxonomy" id="284591"/>
    <lineage>
        <taxon>Eukaryota</taxon>
        <taxon>Fungi</taxon>
        <taxon>Dikarya</taxon>
        <taxon>Ascomycota</taxon>
        <taxon>Saccharomycotina</taxon>
        <taxon>Dipodascomycetes</taxon>
        <taxon>Dipodascales</taxon>
        <taxon>Dipodascales incertae sedis</taxon>
        <taxon>Yarrowia</taxon>
    </lineage>
</organism>
<proteinExistence type="inferred from homology"/>
<gene>
    <name type="primary">COX3</name>
</gene>
<geneLocation type="mitochondrion"/>
<reference key="1">
    <citation type="journal article" date="2001" name="Comp. Funct. Genomics">
        <title>The complete mitochondrial genome of Yarrowia lipolytica.</title>
        <authorList>
            <person name="Kerscher S."/>
            <person name="Durstewitz G."/>
            <person name="Casaregola S."/>
            <person name="Gaillardin C."/>
            <person name="Brandt U."/>
        </authorList>
    </citation>
    <scope>NUCLEOTIDE SEQUENCE [LARGE SCALE GENOMIC DNA]</scope>
    <source>
        <strain>ATCC 20460 / W29 / CBS 7504 / IFP29</strain>
    </source>
</reference>
<name>COX3_YARLI</name>